<organism>
    <name type="scientific">Ceratophyllum demersum</name>
    <name type="common">Rigid hornwort</name>
    <name type="synonym">Coontail</name>
    <dbReference type="NCBI Taxonomy" id="4428"/>
    <lineage>
        <taxon>Eukaryota</taxon>
        <taxon>Viridiplantae</taxon>
        <taxon>Streptophyta</taxon>
        <taxon>Embryophyta</taxon>
        <taxon>Tracheophyta</taxon>
        <taxon>Spermatophyta</taxon>
        <taxon>Magnoliopsida</taxon>
        <taxon>Ceratophyllales</taxon>
        <taxon>Ceratophyllaceae</taxon>
        <taxon>Ceratophyllum</taxon>
    </lineage>
</organism>
<keyword id="KW-0150">Chloroplast</keyword>
<keyword id="KW-0934">Plastid</keyword>
<keyword id="KW-0687">Ribonucleoprotein</keyword>
<keyword id="KW-0689">Ribosomal protein</keyword>
<accession>A8SE74</accession>
<reference key="1">
    <citation type="journal article" date="2007" name="Proc. Natl. Acad. Sci. U.S.A.">
        <title>Using plastid genome-scale data to resolve enigmatic relationships among basal angiosperms.</title>
        <authorList>
            <person name="Moore M.J."/>
            <person name="Bell C.D."/>
            <person name="Soltis P.S."/>
            <person name="Soltis D.E."/>
        </authorList>
    </citation>
    <scope>NUCLEOTIDE SEQUENCE [LARGE SCALE GENOMIC DNA]</scope>
</reference>
<feature type="chain" id="PRO_0000352099" description="Small ribosomal subunit protein uS2c">
    <location>
        <begin position="1"/>
        <end position="236"/>
    </location>
</feature>
<gene>
    <name type="primary">rps2</name>
</gene>
<proteinExistence type="inferred from homology"/>
<sequence>MTRRYWNINLEEMMEAGVHFGHGTRKWNPRMAPYISAKRKGIHIINLTRTARFLSEACDLVFDAASRGKHFLIVGTKNKAADLIASAARKARCHYVNKKWLGGMSTNWSTTETRLQKFRDLRAEQKTGRFNHLPKRDAAMFKRQLSHLQTYLGGIKYMTGLPDIVIIVDQQEEYTALRECVTLGIPTICLIDTNSDPDLADISIPANDDAIASIRLILNKLVFAICEGRSSYIRNR</sequence>
<evidence type="ECO:0000305" key="1"/>
<dbReference type="EMBL" id="EF614270">
    <property type="protein sequence ID" value="ABQ81439.1"/>
    <property type="molecule type" value="Genomic_DNA"/>
</dbReference>
<dbReference type="RefSeq" id="YP_001542436.1">
    <property type="nucleotide sequence ID" value="NC_009962.1"/>
</dbReference>
<dbReference type="SMR" id="A8SE74"/>
<dbReference type="GeneID" id="5729443"/>
<dbReference type="GO" id="GO:0009507">
    <property type="term" value="C:chloroplast"/>
    <property type="evidence" value="ECO:0007669"/>
    <property type="project" value="UniProtKB-SubCell"/>
</dbReference>
<dbReference type="GO" id="GO:0005763">
    <property type="term" value="C:mitochondrial small ribosomal subunit"/>
    <property type="evidence" value="ECO:0007669"/>
    <property type="project" value="TreeGrafter"/>
</dbReference>
<dbReference type="GO" id="GO:0003735">
    <property type="term" value="F:structural constituent of ribosome"/>
    <property type="evidence" value="ECO:0007669"/>
    <property type="project" value="InterPro"/>
</dbReference>
<dbReference type="GO" id="GO:0006412">
    <property type="term" value="P:translation"/>
    <property type="evidence" value="ECO:0007669"/>
    <property type="project" value="UniProtKB-UniRule"/>
</dbReference>
<dbReference type="CDD" id="cd01425">
    <property type="entry name" value="RPS2"/>
    <property type="match status" value="1"/>
</dbReference>
<dbReference type="FunFam" id="3.40.50.10490:FF:000101">
    <property type="match status" value="1"/>
</dbReference>
<dbReference type="FunFam" id="1.10.287.610:FF:000001">
    <property type="entry name" value="30S ribosomal protein S2"/>
    <property type="match status" value="1"/>
</dbReference>
<dbReference type="Gene3D" id="3.40.50.10490">
    <property type="entry name" value="Glucose-6-phosphate isomerase like protein, domain 1"/>
    <property type="match status" value="1"/>
</dbReference>
<dbReference type="Gene3D" id="1.10.287.610">
    <property type="entry name" value="Helix hairpin bin"/>
    <property type="match status" value="1"/>
</dbReference>
<dbReference type="HAMAP" id="MF_00291_B">
    <property type="entry name" value="Ribosomal_uS2_B"/>
    <property type="match status" value="1"/>
</dbReference>
<dbReference type="InterPro" id="IPR001865">
    <property type="entry name" value="Ribosomal_uS2"/>
</dbReference>
<dbReference type="InterPro" id="IPR005706">
    <property type="entry name" value="Ribosomal_uS2_bac/mit/plastid"/>
</dbReference>
<dbReference type="InterPro" id="IPR018130">
    <property type="entry name" value="Ribosomal_uS2_CS"/>
</dbReference>
<dbReference type="InterPro" id="IPR023591">
    <property type="entry name" value="Ribosomal_uS2_flav_dom_sf"/>
</dbReference>
<dbReference type="NCBIfam" id="TIGR01011">
    <property type="entry name" value="rpsB_bact"/>
    <property type="match status" value="1"/>
</dbReference>
<dbReference type="PANTHER" id="PTHR12534">
    <property type="entry name" value="30S RIBOSOMAL PROTEIN S2 PROKARYOTIC AND ORGANELLAR"/>
    <property type="match status" value="1"/>
</dbReference>
<dbReference type="PANTHER" id="PTHR12534:SF0">
    <property type="entry name" value="SMALL RIBOSOMAL SUBUNIT PROTEIN US2M"/>
    <property type="match status" value="1"/>
</dbReference>
<dbReference type="Pfam" id="PF00318">
    <property type="entry name" value="Ribosomal_S2"/>
    <property type="match status" value="1"/>
</dbReference>
<dbReference type="PRINTS" id="PR00395">
    <property type="entry name" value="RIBOSOMALS2"/>
</dbReference>
<dbReference type="SUPFAM" id="SSF52313">
    <property type="entry name" value="Ribosomal protein S2"/>
    <property type="match status" value="1"/>
</dbReference>
<dbReference type="PROSITE" id="PS00962">
    <property type="entry name" value="RIBOSOMAL_S2_1"/>
    <property type="match status" value="1"/>
</dbReference>
<dbReference type="PROSITE" id="PS00963">
    <property type="entry name" value="RIBOSOMAL_S2_2"/>
    <property type="match status" value="1"/>
</dbReference>
<protein>
    <recommendedName>
        <fullName evidence="1">Small ribosomal subunit protein uS2c</fullName>
    </recommendedName>
    <alternativeName>
        <fullName>30S ribosomal protein S2, chloroplastic</fullName>
    </alternativeName>
</protein>
<geneLocation type="chloroplast"/>
<comment type="subcellular location">
    <subcellularLocation>
        <location>Plastid</location>
        <location>Chloroplast</location>
    </subcellularLocation>
</comment>
<comment type="similarity">
    <text evidence="1">Belongs to the universal ribosomal protein uS2 family.</text>
</comment>
<name>RR2_CERDE</name>